<gene>
    <name type="primary">COX8B</name>
    <name type="synonym">COX8H</name>
</gene>
<dbReference type="EMBL" id="AY254828">
    <property type="protein sequence ID" value="AAP32259.1"/>
    <property type="molecule type" value="mRNA"/>
</dbReference>
<dbReference type="SMR" id="Q863F8"/>
<dbReference type="UniPathway" id="UPA00705"/>
<dbReference type="GO" id="GO:0005743">
    <property type="term" value="C:mitochondrial inner membrane"/>
    <property type="evidence" value="ECO:0007669"/>
    <property type="project" value="UniProtKB-SubCell"/>
</dbReference>
<dbReference type="GO" id="GO:0045277">
    <property type="term" value="C:respiratory chain complex IV"/>
    <property type="evidence" value="ECO:0007669"/>
    <property type="project" value="InterPro"/>
</dbReference>
<dbReference type="GO" id="GO:0006123">
    <property type="term" value="P:mitochondrial electron transport, cytochrome c to oxygen"/>
    <property type="evidence" value="ECO:0007669"/>
    <property type="project" value="InterPro"/>
</dbReference>
<dbReference type="CDD" id="cd00930">
    <property type="entry name" value="Cyt_c_Oxidase_VIII"/>
    <property type="match status" value="1"/>
</dbReference>
<dbReference type="FunFam" id="4.10.81.10:FF:000001">
    <property type="entry name" value="Cytochrome c oxidase subunit 8B, mitochondrial"/>
    <property type="match status" value="1"/>
</dbReference>
<dbReference type="Gene3D" id="4.10.81.10">
    <property type="entry name" value="Cytochrome c oxidase, subunit 8"/>
    <property type="match status" value="1"/>
</dbReference>
<dbReference type="InterPro" id="IPR003205">
    <property type="entry name" value="Cyt_c_oxidase_su8"/>
</dbReference>
<dbReference type="InterPro" id="IPR036548">
    <property type="entry name" value="Cyt_c_oxidase_su8_sf"/>
</dbReference>
<dbReference type="PANTHER" id="PTHR16717">
    <property type="entry name" value="CYTOCHROME C OXIDASE POLYPEPTIDE VIII"/>
    <property type="match status" value="1"/>
</dbReference>
<dbReference type="PANTHER" id="PTHR16717:SF4">
    <property type="entry name" value="CYTOCHROME C OXIDASE SUBUNIT 8B, MITOCHONDRIAL"/>
    <property type="match status" value="1"/>
</dbReference>
<dbReference type="Pfam" id="PF02285">
    <property type="entry name" value="COX8"/>
    <property type="match status" value="1"/>
</dbReference>
<dbReference type="SUPFAM" id="SSF81431">
    <property type="entry name" value="Mitochondrial cytochrome c oxidase subunit VIIIb (aka IX)"/>
    <property type="match status" value="1"/>
</dbReference>
<accession>Q863F8</accession>
<keyword id="KW-0472">Membrane</keyword>
<keyword id="KW-0496">Mitochondrion</keyword>
<keyword id="KW-0999">Mitochondrion inner membrane</keyword>
<keyword id="KW-0809">Transit peptide</keyword>
<keyword id="KW-0812">Transmembrane</keyword>
<keyword id="KW-1133">Transmembrane helix</keyword>
<proteinExistence type="inferred from homology"/>
<organism>
    <name type="scientific">Eulemur fulvus fulvus</name>
    <name type="common">Brown lemur</name>
    <dbReference type="NCBI Taxonomy" id="40322"/>
    <lineage>
        <taxon>Eukaryota</taxon>
        <taxon>Metazoa</taxon>
        <taxon>Chordata</taxon>
        <taxon>Craniata</taxon>
        <taxon>Vertebrata</taxon>
        <taxon>Euteleostomi</taxon>
        <taxon>Mammalia</taxon>
        <taxon>Eutheria</taxon>
        <taxon>Euarchontoglires</taxon>
        <taxon>Primates</taxon>
        <taxon>Strepsirrhini</taxon>
        <taxon>Lemuriformes</taxon>
        <taxon>Lemuridae</taxon>
        <taxon>Eulemur</taxon>
    </lineage>
</organism>
<protein>
    <recommendedName>
        <fullName>Cytochrome c oxidase subunit 8B, mitochondrial</fullName>
    </recommendedName>
    <alternativeName>
        <fullName>Cytochrome c oxidase polypeptide VIII-heart</fullName>
    </alternativeName>
    <alternativeName>
        <fullName>Cytochrome c oxidase subunit 8-1</fullName>
    </alternativeName>
    <alternativeName>
        <fullName>Cytochrome c oxidase subunit 8H</fullName>
    </alternativeName>
</protein>
<comment type="function">
    <text evidence="1">Component of the cytochrome c oxidase, the last enzyme in the mitochondrial electron transport chain which drives oxidative phosphorylation. The respiratory chain contains 3 multisubunit complexes succinate dehydrogenase (complex II, CII), ubiquinol-cytochrome c oxidoreductase (cytochrome b-c1 complex, complex III, CIII) and cytochrome c oxidase (complex IV, CIV), that cooperate to transfer electrons derived from NADH and succinate to molecular oxygen, creating an electrochemical gradient over the inner membrane that drives transmembrane transport and the ATP synthase. Cytochrome c oxidase is the component of the respiratory chain that catalyzes the reduction of oxygen to water. Electrons originating from reduced cytochrome c in the intermembrane space (IMS) are transferred via the dinuclear copper A center (CU(A)) of subunit 2 and heme A of subunit 1 to the active site in subunit 1, a binuclear center (BNC) formed by heme A3 and copper B (CU(B)). The BNC reduces molecular oxygen to 2 water molecules using 4 electrons from cytochrome c in the IMS and 4 protons from the mitochondrial matrix.</text>
</comment>
<comment type="pathway">
    <text evidence="1">Energy metabolism; oxidative phosphorylation.</text>
</comment>
<comment type="subunit">
    <text evidence="1">Component of the cytochrome c oxidase (complex IV, CIV), a multisubunit enzyme composed of 14 subunits. The complex is composed of a catalytic core of 3 subunits MT-CO1, MT-CO2 and MT-CO3, encoded in the mitochondrial DNA, and 11 supernumerary subunits COX4I, COX5A, COX5B, COX6A, COX6B, COX6C, COX7A, COX7B, COX7C, COX8 and NDUFA4, which are encoded in the nuclear genome. The complex exists as a monomer or a dimer and forms supercomplexes (SCs) in the inner mitochondrial membrane with NADH-ubiquinone oxidoreductase (complex I, CI) and ubiquinol-cytochrome c oxidoreductase (cytochrome b-c1 complex, complex III, CIII), resulting in different assemblies (supercomplex SCI(1)III(2)IV(1) and megacomplex MCI(2)III(2)IV(2)).</text>
</comment>
<comment type="subcellular location">
    <subcellularLocation>
        <location evidence="1">Mitochondrion inner membrane</location>
        <topology evidence="1">Single-pass membrane protein</topology>
    </subcellularLocation>
</comment>
<comment type="similarity">
    <text evidence="2">Belongs to the cytochrome c oxidase VIII family.</text>
</comment>
<feature type="transit peptide" description="Mitochondrion" evidence="1">
    <location>
        <begin position="1"/>
        <end position="24"/>
    </location>
</feature>
<feature type="chain" id="PRO_0000006177" description="Cytochrome c oxidase subunit 8B, mitochondrial">
    <location>
        <begin position="25"/>
        <end position="70"/>
    </location>
</feature>
<feature type="topological domain" description="Mitochondrial matrix" evidence="1">
    <location>
        <begin position="25"/>
        <end position="35"/>
    </location>
</feature>
<feature type="transmembrane region" description="Helical" evidence="1">
    <location>
        <begin position="36"/>
        <end position="59"/>
    </location>
</feature>
<feature type="topological domain" description="Mitochondrial intermembrane" evidence="1">
    <location>
        <begin position="60"/>
        <end position="70"/>
    </location>
</feature>
<reference key="1">
    <citation type="journal article" date="2003" name="Proc. Natl. Acad. Sci. U.S.A.">
        <title>Adaptive evolution of cytochrome c oxidase subunit VIII in anthropoid primates.</title>
        <authorList>
            <person name="Goldberg A."/>
            <person name="Wildman D.E."/>
            <person name="Schmidt T.R."/>
            <person name="Huttemann M."/>
            <person name="Goodman M."/>
            <person name="Weiss M.L."/>
            <person name="Grossman L.I."/>
        </authorList>
    </citation>
    <scope>NUCLEOTIDE SEQUENCE [MRNA]</scope>
</reference>
<sequence length="70" mass="7693">MPRLPPALRLLQPPLRCWVVPKLHVSAKPARTPTSPAEQAVGLSMMFLSFLVPAGWVLSHLESYKKSSTA</sequence>
<evidence type="ECO:0000250" key="1">
    <source>
        <dbReference type="UniProtKB" id="P10175"/>
    </source>
</evidence>
<evidence type="ECO:0000305" key="2"/>
<name>COX8B_EULFU</name>